<sequence>MAAKDVKFSTDARDRLLRGVDILANAVKVTLGPKGRNVVLDKSYGAPRITKDGVSVAKEIELKDKFENMGAQMVKEVASKSADVAGDGTTTATVLAQAIVREGVKSVAAGMNPMDLKRGIDLAVLAVVEDVKKRSKKIKTSAEVAQVGTISANGDEEVGKIIATAMEKVGNEGVITVEEAKGLDTELDVVEGMQFDRGYLSPYFVTNAEKMVADLENPYILLHEKKLSGLQALLPVLEAVVQSSRPLLIIAEDVEGEALATLVVNKLRGGLKVAAVKAPGFGDRRKAMLEDIAILTGGQVISEDLGIKLENVTIDMLGTAKKVTITKEETTLVDGAGDKKDIEARCSQIRANIEDTSSDYDREKLQERLAKLAGGVAVIKVGGATETEVKEKKDRVDDAMHATRAAVEEGVVAGGGVALLHAIRSLDSVKGANPDQNVGIEIVRRALQAPVRQIAENAGVDGAVVAGKLLENSDTDFGYNAQTGIYENLVTAGVIDPTKVVRAALQGAASIAGLLITTEAMVAEIPEKKDAMPSPDMGGMGGMGGMGF</sequence>
<keyword id="KW-0067">ATP-binding</keyword>
<keyword id="KW-0143">Chaperone</keyword>
<keyword id="KW-0963">Cytoplasm</keyword>
<keyword id="KW-0413">Isomerase</keyword>
<keyword id="KW-0547">Nucleotide-binding</keyword>
<keyword id="KW-1185">Reference proteome</keyword>
<name>CH602_RHORT</name>
<proteinExistence type="inferred from homology"/>
<accession>Q2RWV4</accession>
<evidence type="ECO:0000255" key="1">
    <source>
        <dbReference type="HAMAP-Rule" id="MF_00600"/>
    </source>
</evidence>
<evidence type="ECO:0000256" key="2">
    <source>
        <dbReference type="SAM" id="MobiDB-lite"/>
    </source>
</evidence>
<organism>
    <name type="scientific">Rhodospirillum rubrum (strain ATCC 11170 / ATH 1.1.1 / DSM 467 / LMG 4362 / NCIMB 8255 / S1)</name>
    <dbReference type="NCBI Taxonomy" id="269796"/>
    <lineage>
        <taxon>Bacteria</taxon>
        <taxon>Pseudomonadati</taxon>
        <taxon>Pseudomonadota</taxon>
        <taxon>Alphaproteobacteria</taxon>
        <taxon>Rhodospirillales</taxon>
        <taxon>Rhodospirillaceae</taxon>
        <taxon>Rhodospirillum</taxon>
    </lineage>
</organism>
<comment type="function">
    <text evidence="1">Together with its co-chaperonin GroES, plays an essential role in assisting protein folding. The GroEL-GroES system forms a nano-cage that allows encapsulation of the non-native substrate proteins and provides a physical environment optimized to promote and accelerate protein folding.</text>
</comment>
<comment type="catalytic activity">
    <reaction evidence="1">
        <text>ATP + H2O + a folded polypeptide = ADP + phosphate + an unfolded polypeptide.</text>
        <dbReference type="EC" id="5.6.1.7"/>
    </reaction>
</comment>
<comment type="subunit">
    <text evidence="1">Forms a cylinder of 14 subunits composed of two heptameric rings stacked back-to-back. Interacts with the co-chaperonin GroES.</text>
</comment>
<comment type="subcellular location">
    <subcellularLocation>
        <location evidence="1">Cytoplasm</location>
    </subcellularLocation>
</comment>
<comment type="similarity">
    <text evidence="1">Belongs to the chaperonin (HSP60) family.</text>
</comment>
<protein>
    <recommendedName>
        <fullName evidence="1">Chaperonin GroEL 2</fullName>
        <ecNumber evidence="1">5.6.1.7</ecNumber>
    </recommendedName>
    <alternativeName>
        <fullName evidence="1">60 kDa chaperonin 2</fullName>
    </alternativeName>
    <alternativeName>
        <fullName evidence="1">Chaperonin-60 2</fullName>
        <shortName evidence="1">Cpn60 2</shortName>
    </alternativeName>
</protein>
<feature type="chain" id="PRO_0000256975" description="Chaperonin GroEL 2">
    <location>
        <begin position="1"/>
        <end position="548"/>
    </location>
</feature>
<feature type="region of interest" description="Disordered" evidence="2">
    <location>
        <begin position="529"/>
        <end position="548"/>
    </location>
</feature>
<feature type="compositionally biased region" description="Gly residues" evidence="2">
    <location>
        <begin position="538"/>
        <end position="548"/>
    </location>
</feature>
<feature type="binding site" evidence="1">
    <location>
        <begin position="30"/>
        <end position="33"/>
    </location>
    <ligand>
        <name>ATP</name>
        <dbReference type="ChEBI" id="CHEBI:30616"/>
    </ligand>
</feature>
<feature type="binding site" evidence="1">
    <location>
        <position position="51"/>
    </location>
    <ligand>
        <name>ATP</name>
        <dbReference type="ChEBI" id="CHEBI:30616"/>
    </ligand>
</feature>
<feature type="binding site" evidence="1">
    <location>
        <begin position="87"/>
        <end position="91"/>
    </location>
    <ligand>
        <name>ATP</name>
        <dbReference type="ChEBI" id="CHEBI:30616"/>
    </ligand>
</feature>
<feature type="binding site" evidence="1">
    <location>
        <position position="415"/>
    </location>
    <ligand>
        <name>ATP</name>
        <dbReference type="ChEBI" id="CHEBI:30616"/>
    </ligand>
</feature>
<feature type="binding site" evidence="1">
    <location>
        <position position="496"/>
    </location>
    <ligand>
        <name>ATP</name>
        <dbReference type="ChEBI" id="CHEBI:30616"/>
    </ligand>
</feature>
<dbReference type="EC" id="5.6.1.7" evidence="1"/>
<dbReference type="EMBL" id="CP000230">
    <property type="protein sequence ID" value="ABC21391.1"/>
    <property type="molecule type" value="Genomic_DNA"/>
</dbReference>
<dbReference type="RefSeq" id="YP_425678.1">
    <property type="nucleotide sequence ID" value="NC_007643.1"/>
</dbReference>
<dbReference type="SMR" id="Q2RWV4"/>
<dbReference type="STRING" id="269796.Rru_A0587"/>
<dbReference type="EnsemblBacteria" id="ABC21391">
    <property type="protein sequence ID" value="ABC21391"/>
    <property type="gene ID" value="Rru_A0587"/>
</dbReference>
<dbReference type="KEGG" id="rru:Rru_A0587"/>
<dbReference type="PATRIC" id="fig|269796.9.peg.641"/>
<dbReference type="eggNOG" id="COG0459">
    <property type="taxonomic scope" value="Bacteria"/>
</dbReference>
<dbReference type="HOGENOM" id="CLU_016503_3_0_5"/>
<dbReference type="PhylomeDB" id="Q2RWV4"/>
<dbReference type="Proteomes" id="UP000001929">
    <property type="component" value="Chromosome"/>
</dbReference>
<dbReference type="GO" id="GO:0005737">
    <property type="term" value="C:cytoplasm"/>
    <property type="evidence" value="ECO:0007669"/>
    <property type="project" value="UniProtKB-SubCell"/>
</dbReference>
<dbReference type="GO" id="GO:0005524">
    <property type="term" value="F:ATP binding"/>
    <property type="evidence" value="ECO:0007669"/>
    <property type="project" value="UniProtKB-UniRule"/>
</dbReference>
<dbReference type="GO" id="GO:0140662">
    <property type="term" value="F:ATP-dependent protein folding chaperone"/>
    <property type="evidence" value="ECO:0007669"/>
    <property type="project" value="InterPro"/>
</dbReference>
<dbReference type="GO" id="GO:0016853">
    <property type="term" value="F:isomerase activity"/>
    <property type="evidence" value="ECO:0007669"/>
    <property type="project" value="UniProtKB-KW"/>
</dbReference>
<dbReference type="GO" id="GO:0051082">
    <property type="term" value="F:unfolded protein binding"/>
    <property type="evidence" value="ECO:0007669"/>
    <property type="project" value="UniProtKB-UniRule"/>
</dbReference>
<dbReference type="GO" id="GO:0042026">
    <property type="term" value="P:protein refolding"/>
    <property type="evidence" value="ECO:0007669"/>
    <property type="project" value="UniProtKB-UniRule"/>
</dbReference>
<dbReference type="CDD" id="cd03344">
    <property type="entry name" value="GroEL"/>
    <property type="match status" value="1"/>
</dbReference>
<dbReference type="FunFam" id="1.10.560.10:FF:000001">
    <property type="entry name" value="60 kDa chaperonin"/>
    <property type="match status" value="1"/>
</dbReference>
<dbReference type="FunFam" id="3.50.7.10:FF:000001">
    <property type="entry name" value="60 kDa chaperonin"/>
    <property type="match status" value="1"/>
</dbReference>
<dbReference type="Gene3D" id="3.50.7.10">
    <property type="entry name" value="GroEL"/>
    <property type="match status" value="1"/>
</dbReference>
<dbReference type="Gene3D" id="1.10.560.10">
    <property type="entry name" value="GroEL-like equatorial domain"/>
    <property type="match status" value="1"/>
</dbReference>
<dbReference type="Gene3D" id="3.30.260.10">
    <property type="entry name" value="TCP-1-like chaperonin intermediate domain"/>
    <property type="match status" value="1"/>
</dbReference>
<dbReference type="HAMAP" id="MF_00600">
    <property type="entry name" value="CH60"/>
    <property type="match status" value="1"/>
</dbReference>
<dbReference type="InterPro" id="IPR018370">
    <property type="entry name" value="Chaperonin_Cpn60_CS"/>
</dbReference>
<dbReference type="InterPro" id="IPR001844">
    <property type="entry name" value="Cpn60/GroEL"/>
</dbReference>
<dbReference type="InterPro" id="IPR002423">
    <property type="entry name" value="Cpn60/GroEL/TCP-1"/>
</dbReference>
<dbReference type="InterPro" id="IPR027409">
    <property type="entry name" value="GroEL-like_apical_dom_sf"/>
</dbReference>
<dbReference type="InterPro" id="IPR027413">
    <property type="entry name" value="GROEL-like_equatorial_sf"/>
</dbReference>
<dbReference type="InterPro" id="IPR027410">
    <property type="entry name" value="TCP-1-like_intermed_sf"/>
</dbReference>
<dbReference type="NCBIfam" id="TIGR02348">
    <property type="entry name" value="GroEL"/>
    <property type="match status" value="1"/>
</dbReference>
<dbReference type="NCBIfam" id="NF000592">
    <property type="entry name" value="PRK00013.1"/>
    <property type="match status" value="1"/>
</dbReference>
<dbReference type="NCBIfam" id="NF009487">
    <property type="entry name" value="PRK12849.1"/>
    <property type="match status" value="1"/>
</dbReference>
<dbReference type="NCBIfam" id="NF009488">
    <property type="entry name" value="PRK12850.1"/>
    <property type="match status" value="1"/>
</dbReference>
<dbReference type="NCBIfam" id="NF009489">
    <property type="entry name" value="PRK12851.1"/>
    <property type="match status" value="1"/>
</dbReference>
<dbReference type="PANTHER" id="PTHR45633">
    <property type="entry name" value="60 KDA HEAT SHOCK PROTEIN, MITOCHONDRIAL"/>
    <property type="match status" value="1"/>
</dbReference>
<dbReference type="Pfam" id="PF00118">
    <property type="entry name" value="Cpn60_TCP1"/>
    <property type="match status" value="1"/>
</dbReference>
<dbReference type="PRINTS" id="PR00298">
    <property type="entry name" value="CHAPERONIN60"/>
</dbReference>
<dbReference type="SUPFAM" id="SSF52029">
    <property type="entry name" value="GroEL apical domain-like"/>
    <property type="match status" value="1"/>
</dbReference>
<dbReference type="SUPFAM" id="SSF48592">
    <property type="entry name" value="GroEL equatorial domain-like"/>
    <property type="match status" value="1"/>
</dbReference>
<dbReference type="SUPFAM" id="SSF54849">
    <property type="entry name" value="GroEL-intermediate domain like"/>
    <property type="match status" value="1"/>
</dbReference>
<dbReference type="PROSITE" id="PS00296">
    <property type="entry name" value="CHAPERONINS_CPN60"/>
    <property type="match status" value="1"/>
</dbReference>
<reference key="1">
    <citation type="journal article" date="2011" name="Stand. Genomic Sci.">
        <title>Complete genome sequence of Rhodospirillum rubrum type strain (S1).</title>
        <authorList>
            <person name="Munk A.C."/>
            <person name="Copeland A."/>
            <person name="Lucas S."/>
            <person name="Lapidus A."/>
            <person name="Del Rio T.G."/>
            <person name="Barry K."/>
            <person name="Detter J.C."/>
            <person name="Hammon N."/>
            <person name="Israni S."/>
            <person name="Pitluck S."/>
            <person name="Brettin T."/>
            <person name="Bruce D."/>
            <person name="Han C."/>
            <person name="Tapia R."/>
            <person name="Gilna P."/>
            <person name="Schmutz J."/>
            <person name="Larimer F."/>
            <person name="Land M."/>
            <person name="Kyrpides N.C."/>
            <person name="Mavromatis K."/>
            <person name="Richardson P."/>
            <person name="Rohde M."/>
            <person name="Goeker M."/>
            <person name="Klenk H.P."/>
            <person name="Zhang Y."/>
            <person name="Roberts G.P."/>
            <person name="Reslewic S."/>
            <person name="Schwartz D.C."/>
        </authorList>
    </citation>
    <scope>NUCLEOTIDE SEQUENCE [LARGE SCALE GENOMIC DNA]</scope>
    <source>
        <strain>ATCC 11170 / ATH 1.1.1 / DSM 467 / LMG 4362 / NCIMB 8255 / S1</strain>
    </source>
</reference>
<gene>
    <name evidence="1" type="primary">groEL2</name>
    <name evidence="1" type="synonym">groL2</name>
    <name type="ordered locus">Rru_A0587</name>
</gene>